<name>TAL_GEOUR</name>
<feature type="chain" id="PRO_1000081409" description="Probable transaldolase">
    <location>
        <begin position="1"/>
        <end position="214"/>
    </location>
</feature>
<feature type="active site" description="Schiff-base intermediate with substrate" evidence="1">
    <location>
        <position position="83"/>
    </location>
</feature>
<keyword id="KW-0963">Cytoplasm</keyword>
<keyword id="KW-0570">Pentose shunt</keyword>
<keyword id="KW-1185">Reference proteome</keyword>
<keyword id="KW-0704">Schiff base</keyword>
<keyword id="KW-0808">Transferase</keyword>
<protein>
    <recommendedName>
        <fullName evidence="1">Probable transaldolase</fullName>
        <ecNumber evidence="1">2.2.1.2</ecNumber>
    </recommendedName>
</protein>
<comment type="function">
    <text evidence="1">Transaldolase is important for the balance of metabolites in the pentose-phosphate pathway.</text>
</comment>
<comment type="catalytic activity">
    <reaction evidence="1">
        <text>D-sedoheptulose 7-phosphate + D-glyceraldehyde 3-phosphate = D-erythrose 4-phosphate + beta-D-fructose 6-phosphate</text>
        <dbReference type="Rhea" id="RHEA:17053"/>
        <dbReference type="ChEBI" id="CHEBI:16897"/>
        <dbReference type="ChEBI" id="CHEBI:57483"/>
        <dbReference type="ChEBI" id="CHEBI:57634"/>
        <dbReference type="ChEBI" id="CHEBI:59776"/>
        <dbReference type="EC" id="2.2.1.2"/>
    </reaction>
</comment>
<comment type="pathway">
    <text evidence="1">Carbohydrate degradation; pentose phosphate pathway; D-glyceraldehyde 3-phosphate and beta-D-fructose 6-phosphate from D-ribose 5-phosphate and D-xylulose 5-phosphate (non-oxidative stage): step 2/3.</text>
</comment>
<comment type="subcellular location">
    <subcellularLocation>
        <location evidence="1">Cytoplasm</location>
    </subcellularLocation>
</comment>
<comment type="similarity">
    <text evidence="1">Belongs to the transaldolase family. Type 3B subfamily.</text>
</comment>
<accession>A5GBY8</accession>
<gene>
    <name evidence="1" type="primary">tal</name>
    <name type="ordered locus">Gura_0705</name>
</gene>
<organism>
    <name type="scientific">Geotalea uraniireducens (strain Rf4)</name>
    <name type="common">Geobacter uraniireducens</name>
    <dbReference type="NCBI Taxonomy" id="351605"/>
    <lineage>
        <taxon>Bacteria</taxon>
        <taxon>Pseudomonadati</taxon>
        <taxon>Thermodesulfobacteriota</taxon>
        <taxon>Desulfuromonadia</taxon>
        <taxon>Geobacterales</taxon>
        <taxon>Geobacteraceae</taxon>
        <taxon>Geotalea</taxon>
    </lineage>
</organism>
<evidence type="ECO:0000255" key="1">
    <source>
        <dbReference type="HAMAP-Rule" id="MF_00494"/>
    </source>
</evidence>
<reference key="1">
    <citation type="submission" date="2007-05" db="EMBL/GenBank/DDBJ databases">
        <title>Complete sequence of Geobacter uraniireducens Rf4.</title>
        <authorList>
            <consortium name="US DOE Joint Genome Institute"/>
            <person name="Copeland A."/>
            <person name="Lucas S."/>
            <person name="Lapidus A."/>
            <person name="Barry K."/>
            <person name="Detter J.C."/>
            <person name="Glavina del Rio T."/>
            <person name="Hammon N."/>
            <person name="Israni S."/>
            <person name="Dalin E."/>
            <person name="Tice H."/>
            <person name="Pitluck S."/>
            <person name="Chertkov O."/>
            <person name="Brettin T."/>
            <person name="Bruce D."/>
            <person name="Han C."/>
            <person name="Schmutz J."/>
            <person name="Larimer F."/>
            <person name="Land M."/>
            <person name="Hauser L."/>
            <person name="Kyrpides N."/>
            <person name="Mikhailova N."/>
            <person name="Shelobolina E."/>
            <person name="Aklujkar M."/>
            <person name="Lovley D."/>
            <person name="Richardson P."/>
        </authorList>
    </citation>
    <scope>NUCLEOTIDE SEQUENCE [LARGE SCALE GENOMIC DNA]</scope>
    <source>
        <strain>ATCC BAA-1134 / JCM 13001 / Rf4</strain>
    </source>
</reference>
<dbReference type="EC" id="2.2.1.2" evidence="1"/>
<dbReference type="EMBL" id="CP000698">
    <property type="protein sequence ID" value="ABQ24915.1"/>
    <property type="molecule type" value="Genomic_DNA"/>
</dbReference>
<dbReference type="RefSeq" id="WP_011937639.1">
    <property type="nucleotide sequence ID" value="NC_009483.1"/>
</dbReference>
<dbReference type="SMR" id="A5GBY8"/>
<dbReference type="STRING" id="351605.Gura_0705"/>
<dbReference type="KEGG" id="gur:Gura_0705"/>
<dbReference type="HOGENOM" id="CLU_079764_0_0_7"/>
<dbReference type="OrthoDB" id="9807051at2"/>
<dbReference type="UniPathway" id="UPA00115">
    <property type="reaction ID" value="UER00414"/>
</dbReference>
<dbReference type="Proteomes" id="UP000006695">
    <property type="component" value="Chromosome"/>
</dbReference>
<dbReference type="GO" id="GO:0005737">
    <property type="term" value="C:cytoplasm"/>
    <property type="evidence" value="ECO:0007669"/>
    <property type="project" value="UniProtKB-SubCell"/>
</dbReference>
<dbReference type="GO" id="GO:0016832">
    <property type="term" value="F:aldehyde-lyase activity"/>
    <property type="evidence" value="ECO:0007669"/>
    <property type="project" value="InterPro"/>
</dbReference>
<dbReference type="GO" id="GO:0004801">
    <property type="term" value="F:transaldolase activity"/>
    <property type="evidence" value="ECO:0007669"/>
    <property type="project" value="UniProtKB-UniRule"/>
</dbReference>
<dbReference type="GO" id="GO:0005975">
    <property type="term" value="P:carbohydrate metabolic process"/>
    <property type="evidence" value="ECO:0007669"/>
    <property type="project" value="InterPro"/>
</dbReference>
<dbReference type="GO" id="GO:0006098">
    <property type="term" value="P:pentose-phosphate shunt"/>
    <property type="evidence" value="ECO:0007669"/>
    <property type="project" value="UniProtKB-UniRule"/>
</dbReference>
<dbReference type="CDD" id="cd00956">
    <property type="entry name" value="Transaldolase_FSA"/>
    <property type="match status" value="1"/>
</dbReference>
<dbReference type="FunFam" id="3.20.20.70:FF:000018">
    <property type="entry name" value="Probable transaldolase"/>
    <property type="match status" value="1"/>
</dbReference>
<dbReference type="Gene3D" id="3.20.20.70">
    <property type="entry name" value="Aldolase class I"/>
    <property type="match status" value="1"/>
</dbReference>
<dbReference type="HAMAP" id="MF_00494">
    <property type="entry name" value="Transaldolase_3b"/>
    <property type="match status" value="1"/>
</dbReference>
<dbReference type="InterPro" id="IPR013785">
    <property type="entry name" value="Aldolase_TIM"/>
</dbReference>
<dbReference type="InterPro" id="IPR001585">
    <property type="entry name" value="TAL/FSA"/>
</dbReference>
<dbReference type="InterPro" id="IPR022999">
    <property type="entry name" value="Transaldolase_3B"/>
</dbReference>
<dbReference type="InterPro" id="IPR004731">
    <property type="entry name" value="Transaldolase_3B/F6P_aldolase"/>
</dbReference>
<dbReference type="InterPro" id="IPR018225">
    <property type="entry name" value="Transaldolase_AS"/>
</dbReference>
<dbReference type="InterPro" id="IPR033919">
    <property type="entry name" value="TSA/FSA_arc/bac"/>
</dbReference>
<dbReference type="NCBIfam" id="TIGR00875">
    <property type="entry name" value="fsa_talC_mipB"/>
    <property type="match status" value="1"/>
</dbReference>
<dbReference type="PANTHER" id="PTHR10683:SF40">
    <property type="entry name" value="FRUCTOSE-6-PHOSPHATE ALDOLASE 1-RELATED"/>
    <property type="match status" value="1"/>
</dbReference>
<dbReference type="PANTHER" id="PTHR10683">
    <property type="entry name" value="TRANSALDOLASE"/>
    <property type="match status" value="1"/>
</dbReference>
<dbReference type="Pfam" id="PF00923">
    <property type="entry name" value="TAL_FSA"/>
    <property type="match status" value="1"/>
</dbReference>
<dbReference type="SUPFAM" id="SSF51569">
    <property type="entry name" value="Aldolase"/>
    <property type="match status" value="1"/>
</dbReference>
<dbReference type="PROSITE" id="PS01054">
    <property type="entry name" value="TRANSALDOLASE_1"/>
    <property type="match status" value="1"/>
</dbReference>
<dbReference type="PROSITE" id="PS00958">
    <property type="entry name" value="TRANSALDOLASE_2"/>
    <property type="match status" value="1"/>
</dbReference>
<sequence>MKFFIDTADVKEIREAHELGVVDGVTTNPSLIAKSGRKFADVIKEITSIVDGPISAEVVALDHDGMIKEAEELVKIHPNIVIKLPMTTEGLKATKTLHGEGIKTNVTLIFSPMQALLAAKAGASYVSPFVGRLDDISQDGMGIVEEIRTIFDNYGYTTEIIVASVRNPVHVLNSALIGADVATIPYSVIMQLAKHPLTDAGIKKFLEDWEKVPK</sequence>
<proteinExistence type="inferred from homology"/>